<feature type="chain" id="PRO_0000238080" description="33 kDa chaperonin">
    <location>
        <begin position="1"/>
        <end position="300"/>
    </location>
</feature>
<feature type="disulfide bond" description="Redox-active" evidence="1">
    <location>
        <begin position="247"/>
        <end position="249"/>
    </location>
</feature>
<feature type="disulfide bond" description="Redox-active" evidence="1">
    <location>
        <begin position="280"/>
        <end position="283"/>
    </location>
</feature>
<protein>
    <recommendedName>
        <fullName evidence="1">33 kDa chaperonin</fullName>
    </recommendedName>
    <alternativeName>
        <fullName evidence="1">Heat shock protein 33 homolog</fullName>
        <shortName evidence="1">HSP33</shortName>
    </alternativeName>
</protein>
<name>HSLO_PROM9</name>
<accession>Q31BL9</accession>
<organism>
    <name type="scientific">Prochlorococcus marinus (strain MIT 9312)</name>
    <dbReference type="NCBI Taxonomy" id="74546"/>
    <lineage>
        <taxon>Bacteria</taxon>
        <taxon>Bacillati</taxon>
        <taxon>Cyanobacteriota</taxon>
        <taxon>Cyanophyceae</taxon>
        <taxon>Synechococcales</taxon>
        <taxon>Prochlorococcaceae</taxon>
        <taxon>Prochlorococcus</taxon>
    </lineage>
</organism>
<proteinExistence type="inferred from homology"/>
<reference key="1">
    <citation type="journal article" date="2006" name="Science">
        <title>Genomic islands and the ecology and evolution of Prochlorococcus.</title>
        <authorList>
            <person name="Coleman M.L."/>
            <person name="Sullivan M.B."/>
            <person name="Martiny A.C."/>
            <person name="Steglich C."/>
            <person name="Barry K."/>
            <person name="Delong E.F."/>
            <person name="Chisholm S.W."/>
        </authorList>
    </citation>
    <scope>NUCLEOTIDE SEQUENCE [LARGE SCALE GENOMIC DNA]</scope>
    <source>
        <strain>MIT 9312</strain>
    </source>
</reference>
<comment type="function">
    <text evidence="1">Redox regulated molecular chaperone. Protects both thermally unfolding and oxidatively damaged proteins from irreversible aggregation. Plays an important role in the bacterial defense system toward oxidative stress.</text>
</comment>
<comment type="subcellular location">
    <subcellularLocation>
        <location evidence="1">Cytoplasm</location>
    </subcellularLocation>
</comment>
<comment type="PTM">
    <text evidence="1">Under oxidizing conditions two disulfide bonds are formed involving the reactive cysteines. Under reducing conditions zinc is bound to the reactive cysteines and the protein is inactive.</text>
</comment>
<comment type="similarity">
    <text evidence="1">Belongs to the HSP33 family.</text>
</comment>
<dbReference type="EMBL" id="CP000111">
    <property type="protein sequence ID" value="ABB49726.1"/>
    <property type="molecule type" value="Genomic_DNA"/>
</dbReference>
<dbReference type="RefSeq" id="WP_011376221.1">
    <property type="nucleotide sequence ID" value="NC_007577.1"/>
</dbReference>
<dbReference type="SMR" id="Q31BL9"/>
<dbReference type="STRING" id="74546.PMT9312_0665"/>
<dbReference type="KEGG" id="pmi:PMT9312_0665"/>
<dbReference type="eggNOG" id="COG1281">
    <property type="taxonomic scope" value="Bacteria"/>
</dbReference>
<dbReference type="HOGENOM" id="CLU_054493_1_0_3"/>
<dbReference type="OrthoDB" id="9776534at2"/>
<dbReference type="Proteomes" id="UP000002715">
    <property type="component" value="Chromosome"/>
</dbReference>
<dbReference type="GO" id="GO:0005737">
    <property type="term" value="C:cytoplasm"/>
    <property type="evidence" value="ECO:0007669"/>
    <property type="project" value="UniProtKB-SubCell"/>
</dbReference>
<dbReference type="GO" id="GO:0044183">
    <property type="term" value="F:protein folding chaperone"/>
    <property type="evidence" value="ECO:0007669"/>
    <property type="project" value="TreeGrafter"/>
</dbReference>
<dbReference type="GO" id="GO:0051082">
    <property type="term" value="F:unfolded protein binding"/>
    <property type="evidence" value="ECO:0007669"/>
    <property type="project" value="UniProtKB-UniRule"/>
</dbReference>
<dbReference type="GO" id="GO:0042026">
    <property type="term" value="P:protein refolding"/>
    <property type="evidence" value="ECO:0007669"/>
    <property type="project" value="TreeGrafter"/>
</dbReference>
<dbReference type="CDD" id="cd00498">
    <property type="entry name" value="Hsp33"/>
    <property type="match status" value="1"/>
</dbReference>
<dbReference type="Gene3D" id="3.55.30.10">
    <property type="entry name" value="Hsp33 domain"/>
    <property type="match status" value="1"/>
</dbReference>
<dbReference type="Gene3D" id="3.90.1280.10">
    <property type="entry name" value="HSP33 redox switch-like"/>
    <property type="match status" value="1"/>
</dbReference>
<dbReference type="HAMAP" id="MF_00117">
    <property type="entry name" value="HslO"/>
    <property type="match status" value="1"/>
</dbReference>
<dbReference type="InterPro" id="IPR000397">
    <property type="entry name" value="Heat_shock_Hsp33"/>
</dbReference>
<dbReference type="InterPro" id="IPR016154">
    <property type="entry name" value="Heat_shock_Hsp33_C"/>
</dbReference>
<dbReference type="InterPro" id="IPR016153">
    <property type="entry name" value="Heat_shock_Hsp33_N"/>
</dbReference>
<dbReference type="NCBIfam" id="NF001033">
    <property type="entry name" value="PRK00114.1"/>
    <property type="match status" value="1"/>
</dbReference>
<dbReference type="PANTHER" id="PTHR30111">
    <property type="entry name" value="33 KDA CHAPERONIN"/>
    <property type="match status" value="1"/>
</dbReference>
<dbReference type="PANTHER" id="PTHR30111:SF1">
    <property type="entry name" value="33 KDA CHAPERONIN"/>
    <property type="match status" value="1"/>
</dbReference>
<dbReference type="Pfam" id="PF01430">
    <property type="entry name" value="HSP33"/>
    <property type="match status" value="1"/>
</dbReference>
<dbReference type="PIRSF" id="PIRSF005261">
    <property type="entry name" value="Heat_shock_Hsp33"/>
    <property type="match status" value="1"/>
</dbReference>
<dbReference type="SUPFAM" id="SSF64397">
    <property type="entry name" value="Hsp33 domain"/>
    <property type="match status" value="1"/>
</dbReference>
<dbReference type="SUPFAM" id="SSF118352">
    <property type="entry name" value="HSP33 redox switch-like"/>
    <property type="match status" value="1"/>
</dbReference>
<keyword id="KW-0143">Chaperone</keyword>
<keyword id="KW-0963">Cytoplasm</keyword>
<keyword id="KW-1015">Disulfide bond</keyword>
<keyword id="KW-0676">Redox-active center</keyword>
<keyword id="KW-0862">Zinc</keyword>
<gene>
    <name evidence="1" type="primary">hslO</name>
    <name type="ordered locus">PMT9312_0665</name>
</gene>
<sequence length="300" mass="33332">MKDRIVRATAANGGIRLVAVLTTESSLEAKKRHGLSYITTCILGRAFSASLLLASSMKIMHGRVTLRVRSDGPLKGLLVDAGRDGKVRGYVGNPDLELDLVKINNNKYSFDFTKALGTGYLNVIRDSGIGEPFTSTVELVNGNIAEDLASYLYHSEQTPSAVFIGEKIQNKNVICSGGLLAQVLPKKDTDPLLVSLLEERCKEINSFSEDLFHSQDNLLSLIRNIFPDIDDKSISEKARSQEVGFKCKCSKQRSLNAMKMLDKCELEDILKKDGRAELVCEFCKNKYLINYEEIRLMIES</sequence>
<evidence type="ECO:0000255" key="1">
    <source>
        <dbReference type="HAMAP-Rule" id="MF_00117"/>
    </source>
</evidence>